<feature type="signal peptide" evidence="1">
    <location>
        <begin position="1"/>
        <end position="20"/>
    </location>
</feature>
<feature type="chain" id="PRO_0000299654" description="Putative uncharacterized protein YAL034C-B">
    <location>
        <begin position="21"/>
        <end position="117"/>
    </location>
</feature>
<dbReference type="EMBL" id="U12980">
    <property type="protein sequence ID" value="AAC05013.1"/>
    <property type="molecule type" value="Genomic_DNA"/>
</dbReference>
<dbReference type="EMBL" id="AY693260">
    <property type="protein sequence ID" value="AAT93279.1"/>
    <property type="molecule type" value="Genomic_DNA"/>
</dbReference>
<dbReference type="PIR" id="S70296">
    <property type="entry name" value="S70296"/>
</dbReference>
<dbReference type="PaxDb" id="4932-YAL034C-B"/>
<dbReference type="EnsemblFungi" id="YAL034C-B_mRNA">
    <property type="protein sequence ID" value="YAL034C-B"/>
    <property type="gene ID" value="YAL034C-B"/>
</dbReference>
<dbReference type="AGR" id="SGD:S000002137"/>
<dbReference type="SGD" id="S000002137">
    <property type="gene designation" value="YAL034C-B"/>
</dbReference>
<dbReference type="HOGENOM" id="CLU_2086156_0_0_1"/>
<gene>
    <name type="ordered locus">YAL034C-B</name>
    <name type="ORF">YAL035C-A</name>
</gene>
<accession>O13515</accession>
<name>YA034_YEAST</name>
<comment type="miscellaneous">
    <text evidence="2">Partially overlaps MTW1.</text>
</comment>
<comment type="caution">
    <text evidence="3">Product of a dubious gene prediction unlikely to encode a functional protein. Because of that it is not part of the S.cerevisiae S288c complete/reference proteome set.</text>
</comment>
<sequence length="117" mass="13264">MAAVHLYIISFTALMISSTSEMGGYPKCSVNIEVDLIVGADMVVLIVLTQFQRVITQLPNKCQLIFNASYLPFLFTRTIKISKVERQQGERSKMAMKSKIELKLIHKGSHFYIQLPI</sequence>
<reference key="1">
    <citation type="journal article" date="1995" name="Proc. Natl. Acad. Sci. U.S.A.">
        <title>The nucleotide sequence of chromosome I from Saccharomyces cerevisiae.</title>
        <authorList>
            <person name="Bussey H."/>
            <person name="Kaback D.B."/>
            <person name="Zhong W.-W."/>
            <person name="Vo D.H."/>
            <person name="Clark M.W."/>
            <person name="Fortin N."/>
            <person name="Hall J."/>
            <person name="Ouellette B.F.F."/>
            <person name="Keng T."/>
            <person name="Barton A.B."/>
            <person name="Su Y."/>
            <person name="Davies C.J."/>
            <person name="Storms R.K."/>
        </authorList>
    </citation>
    <scope>NUCLEOTIDE SEQUENCE [LARGE SCALE GENOMIC DNA]</scope>
    <source>
        <strain>ATCC 204508 / S288c</strain>
    </source>
</reference>
<reference key="2">
    <citation type="journal article" date="2014" name="G3 (Bethesda)">
        <title>The reference genome sequence of Saccharomyces cerevisiae: Then and now.</title>
        <authorList>
            <person name="Engel S.R."/>
            <person name="Dietrich F.S."/>
            <person name="Fisk D.G."/>
            <person name="Binkley G."/>
            <person name="Balakrishnan R."/>
            <person name="Costanzo M.C."/>
            <person name="Dwight S.S."/>
            <person name="Hitz B.C."/>
            <person name="Karra K."/>
            <person name="Nash R.S."/>
            <person name="Weng S."/>
            <person name="Wong E.D."/>
            <person name="Lloyd P."/>
            <person name="Skrzypek M.S."/>
            <person name="Miyasato S.R."/>
            <person name="Simison M."/>
            <person name="Cherry J.M."/>
        </authorList>
    </citation>
    <scope>GENOME REANNOTATION</scope>
    <source>
        <strain>ATCC 204508 / S288c</strain>
    </source>
</reference>
<reference key="3">
    <citation type="journal article" date="2007" name="Genome Res.">
        <title>Approaching a complete repository of sequence-verified protein-encoding clones for Saccharomyces cerevisiae.</title>
        <authorList>
            <person name="Hu Y."/>
            <person name="Rolfs A."/>
            <person name="Bhullar B."/>
            <person name="Murthy T.V.S."/>
            <person name="Zhu C."/>
            <person name="Berger M.F."/>
            <person name="Camargo A.A."/>
            <person name="Kelley F."/>
            <person name="McCarron S."/>
            <person name="Jepson D."/>
            <person name="Richardson A."/>
            <person name="Raphael J."/>
            <person name="Moreira D."/>
            <person name="Taycher E."/>
            <person name="Zuo D."/>
            <person name="Mohr S."/>
            <person name="Kane M.F."/>
            <person name="Williamson J."/>
            <person name="Simpson A.J.G."/>
            <person name="Bulyk M.L."/>
            <person name="Harlow E."/>
            <person name="Marsischky G."/>
            <person name="Kolodner R.D."/>
            <person name="LaBaer J."/>
        </authorList>
    </citation>
    <scope>NUCLEOTIDE SEQUENCE [GENOMIC DNA]</scope>
    <source>
        <strain>ATCC 204508 / S288c</strain>
    </source>
</reference>
<protein>
    <recommendedName>
        <fullName>Putative uncharacterized protein YAL034C-B</fullName>
    </recommendedName>
</protein>
<proteinExistence type="uncertain"/>
<evidence type="ECO:0000255" key="1"/>
<evidence type="ECO:0000305" key="2"/>
<evidence type="ECO:0000305" key="3">
    <source>
    </source>
</evidence>
<organism>
    <name type="scientific">Saccharomyces cerevisiae (strain ATCC 204508 / S288c)</name>
    <name type="common">Baker's yeast</name>
    <dbReference type="NCBI Taxonomy" id="559292"/>
    <lineage>
        <taxon>Eukaryota</taxon>
        <taxon>Fungi</taxon>
        <taxon>Dikarya</taxon>
        <taxon>Ascomycota</taxon>
        <taxon>Saccharomycotina</taxon>
        <taxon>Saccharomycetes</taxon>
        <taxon>Saccharomycetales</taxon>
        <taxon>Saccharomycetaceae</taxon>
        <taxon>Saccharomyces</taxon>
    </lineage>
</organism>
<keyword id="KW-0732">Signal</keyword>